<reference key="1">
    <citation type="journal article" date="2009" name="Science">
        <title>The dynamics and time scale of ongoing genomic erosion in symbiotic bacteria.</title>
        <authorList>
            <person name="Moran N.A."/>
            <person name="McLaughlin H.J."/>
            <person name="Sorek R."/>
        </authorList>
    </citation>
    <scope>NUCLEOTIDE SEQUENCE [LARGE SCALE GENOMIC DNA]</scope>
    <source>
        <strain>Tuc7</strain>
    </source>
</reference>
<gene>
    <name evidence="1" type="primary">rpsC</name>
    <name type="ordered locus">BUAPTUC7_512</name>
</gene>
<comment type="function">
    <text evidence="1">Binds the lower part of the 30S subunit head. Binds mRNA in the 70S ribosome, positioning it for translation.</text>
</comment>
<comment type="subunit">
    <text evidence="1">Part of the 30S ribosomal subunit. Forms a tight complex with proteins S10 and S14.</text>
</comment>
<comment type="similarity">
    <text evidence="1">Belongs to the universal ribosomal protein uS3 family.</text>
</comment>
<feature type="chain" id="PRO_1000165483" description="Small ribosomal subunit protein uS3">
    <location>
        <begin position="1"/>
        <end position="233"/>
    </location>
</feature>
<feature type="domain" description="KH type-2" evidence="1">
    <location>
        <begin position="39"/>
        <end position="107"/>
    </location>
</feature>
<sequence>MGQKVHPNGMRLGIIKKWNSVWFANTKDFADHLDSDYKVRQFLMKTLEKASISRIIIERPAKSIRVTIYTARPGIVIGKKGEDVEKLRISIAKITGVPVQINISEVRKPELDAKLVSDSITSQLERRVMFRRAMKRSVQNAMRQGAKGIKVEVSGRLGGAEIARREWYREGRVPLHTLRANIDYSISEAHTTYGVIGVKVWIFKGEILGGMETVERLDKPSVQTKKQYRKNRK</sequence>
<dbReference type="EMBL" id="CP001158">
    <property type="protein sequence ID" value="ACL30308.1"/>
    <property type="molecule type" value="Genomic_DNA"/>
</dbReference>
<dbReference type="RefSeq" id="WP_010896147.1">
    <property type="nucleotide sequence ID" value="NC_011834.1"/>
</dbReference>
<dbReference type="SMR" id="B8D843"/>
<dbReference type="KEGG" id="bau:BUAPTUC7_512"/>
<dbReference type="HOGENOM" id="CLU_058591_0_2_6"/>
<dbReference type="GO" id="GO:0022627">
    <property type="term" value="C:cytosolic small ribosomal subunit"/>
    <property type="evidence" value="ECO:0007669"/>
    <property type="project" value="TreeGrafter"/>
</dbReference>
<dbReference type="GO" id="GO:0003729">
    <property type="term" value="F:mRNA binding"/>
    <property type="evidence" value="ECO:0007669"/>
    <property type="project" value="UniProtKB-UniRule"/>
</dbReference>
<dbReference type="GO" id="GO:0019843">
    <property type="term" value="F:rRNA binding"/>
    <property type="evidence" value="ECO:0007669"/>
    <property type="project" value="UniProtKB-UniRule"/>
</dbReference>
<dbReference type="GO" id="GO:0003735">
    <property type="term" value="F:structural constituent of ribosome"/>
    <property type="evidence" value="ECO:0007669"/>
    <property type="project" value="InterPro"/>
</dbReference>
<dbReference type="GO" id="GO:0006412">
    <property type="term" value="P:translation"/>
    <property type="evidence" value="ECO:0007669"/>
    <property type="project" value="UniProtKB-UniRule"/>
</dbReference>
<dbReference type="CDD" id="cd02412">
    <property type="entry name" value="KH-II_30S_S3"/>
    <property type="match status" value="1"/>
</dbReference>
<dbReference type="FunFam" id="3.30.1140.32:FF:000001">
    <property type="entry name" value="30S ribosomal protein S3"/>
    <property type="match status" value="1"/>
</dbReference>
<dbReference type="FunFam" id="3.30.300.20:FF:000001">
    <property type="entry name" value="30S ribosomal protein S3"/>
    <property type="match status" value="1"/>
</dbReference>
<dbReference type="Gene3D" id="3.30.300.20">
    <property type="match status" value="1"/>
</dbReference>
<dbReference type="Gene3D" id="3.30.1140.32">
    <property type="entry name" value="Ribosomal protein S3, C-terminal domain"/>
    <property type="match status" value="1"/>
</dbReference>
<dbReference type="HAMAP" id="MF_01309_B">
    <property type="entry name" value="Ribosomal_uS3_B"/>
    <property type="match status" value="1"/>
</dbReference>
<dbReference type="InterPro" id="IPR004087">
    <property type="entry name" value="KH_dom"/>
</dbReference>
<dbReference type="InterPro" id="IPR015946">
    <property type="entry name" value="KH_dom-like_a/b"/>
</dbReference>
<dbReference type="InterPro" id="IPR004044">
    <property type="entry name" value="KH_dom_type_2"/>
</dbReference>
<dbReference type="InterPro" id="IPR009019">
    <property type="entry name" value="KH_sf_prok-type"/>
</dbReference>
<dbReference type="InterPro" id="IPR036419">
    <property type="entry name" value="Ribosomal_S3_C_sf"/>
</dbReference>
<dbReference type="InterPro" id="IPR005704">
    <property type="entry name" value="Ribosomal_uS3_bac-typ"/>
</dbReference>
<dbReference type="InterPro" id="IPR001351">
    <property type="entry name" value="Ribosomal_uS3_C"/>
</dbReference>
<dbReference type="InterPro" id="IPR018280">
    <property type="entry name" value="Ribosomal_uS3_CS"/>
</dbReference>
<dbReference type="NCBIfam" id="TIGR01009">
    <property type="entry name" value="rpsC_bact"/>
    <property type="match status" value="1"/>
</dbReference>
<dbReference type="PANTHER" id="PTHR11760">
    <property type="entry name" value="30S/40S RIBOSOMAL PROTEIN S3"/>
    <property type="match status" value="1"/>
</dbReference>
<dbReference type="PANTHER" id="PTHR11760:SF19">
    <property type="entry name" value="SMALL RIBOSOMAL SUBUNIT PROTEIN US3C"/>
    <property type="match status" value="1"/>
</dbReference>
<dbReference type="Pfam" id="PF07650">
    <property type="entry name" value="KH_2"/>
    <property type="match status" value="1"/>
</dbReference>
<dbReference type="Pfam" id="PF00189">
    <property type="entry name" value="Ribosomal_S3_C"/>
    <property type="match status" value="1"/>
</dbReference>
<dbReference type="SMART" id="SM00322">
    <property type="entry name" value="KH"/>
    <property type="match status" value="1"/>
</dbReference>
<dbReference type="SUPFAM" id="SSF54814">
    <property type="entry name" value="Prokaryotic type KH domain (KH-domain type II)"/>
    <property type="match status" value="1"/>
</dbReference>
<dbReference type="SUPFAM" id="SSF54821">
    <property type="entry name" value="Ribosomal protein S3 C-terminal domain"/>
    <property type="match status" value="1"/>
</dbReference>
<dbReference type="PROSITE" id="PS50823">
    <property type="entry name" value="KH_TYPE_2"/>
    <property type="match status" value="1"/>
</dbReference>
<dbReference type="PROSITE" id="PS00548">
    <property type="entry name" value="RIBOSOMAL_S3"/>
    <property type="match status" value="1"/>
</dbReference>
<protein>
    <recommendedName>
        <fullName evidence="1">Small ribosomal subunit protein uS3</fullName>
    </recommendedName>
    <alternativeName>
        <fullName evidence="2">30S ribosomal protein S3</fullName>
    </alternativeName>
</protein>
<organism>
    <name type="scientific">Buchnera aphidicola subsp. Acyrthosiphon pisum (strain Tuc7)</name>
    <dbReference type="NCBI Taxonomy" id="561501"/>
    <lineage>
        <taxon>Bacteria</taxon>
        <taxon>Pseudomonadati</taxon>
        <taxon>Pseudomonadota</taxon>
        <taxon>Gammaproteobacteria</taxon>
        <taxon>Enterobacterales</taxon>
        <taxon>Erwiniaceae</taxon>
        <taxon>Buchnera</taxon>
    </lineage>
</organism>
<name>RS3_BUCAT</name>
<proteinExistence type="inferred from homology"/>
<keyword id="KW-0687">Ribonucleoprotein</keyword>
<keyword id="KW-0689">Ribosomal protein</keyword>
<keyword id="KW-0694">RNA-binding</keyword>
<keyword id="KW-0699">rRNA-binding</keyword>
<accession>B8D843</accession>
<evidence type="ECO:0000255" key="1">
    <source>
        <dbReference type="HAMAP-Rule" id="MF_01309"/>
    </source>
</evidence>
<evidence type="ECO:0000305" key="2"/>